<comment type="similarity">
    <text evidence="1">Belongs to the bacterial ribosomal protein bL33 family.</text>
</comment>
<feature type="chain" id="PRO_1000078921" description="Large ribosomal subunit protein bL33">
    <location>
        <begin position="1"/>
        <end position="54"/>
    </location>
</feature>
<sequence length="54" mass="6547">MASKKGNRIIIKMRSTESAHTYTTTKNRKNDPNRLELRRYDPTLRRHVLYRETK</sequence>
<organism>
    <name type="scientific">Roseiflexus castenholzii (strain DSM 13941 / HLO8)</name>
    <dbReference type="NCBI Taxonomy" id="383372"/>
    <lineage>
        <taxon>Bacteria</taxon>
        <taxon>Bacillati</taxon>
        <taxon>Chloroflexota</taxon>
        <taxon>Chloroflexia</taxon>
        <taxon>Chloroflexales</taxon>
        <taxon>Roseiflexineae</taxon>
        <taxon>Roseiflexaceae</taxon>
        <taxon>Roseiflexus</taxon>
    </lineage>
</organism>
<keyword id="KW-1185">Reference proteome</keyword>
<keyword id="KW-0687">Ribonucleoprotein</keyword>
<keyword id="KW-0689">Ribosomal protein</keyword>
<dbReference type="EMBL" id="CP000804">
    <property type="protein sequence ID" value="ABU59384.1"/>
    <property type="molecule type" value="Genomic_DNA"/>
</dbReference>
<dbReference type="RefSeq" id="WP_012121808.1">
    <property type="nucleotide sequence ID" value="NC_009767.1"/>
</dbReference>
<dbReference type="STRING" id="383372.Rcas_3334"/>
<dbReference type="KEGG" id="rca:Rcas_3334"/>
<dbReference type="eggNOG" id="COG0267">
    <property type="taxonomic scope" value="Bacteria"/>
</dbReference>
<dbReference type="HOGENOM" id="CLU_190949_3_0_0"/>
<dbReference type="OrthoDB" id="9801333at2"/>
<dbReference type="Proteomes" id="UP000000263">
    <property type="component" value="Chromosome"/>
</dbReference>
<dbReference type="GO" id="GO:0022625">
    <property type="term" value="C:cytosolic large ribosomal subunit"/>
    <property type="evidence" value="ECO:0007669"/>
    <property type="project" value="TreeGrafter"/>
</dbReference>
<dbReference type="GO" id="GO:0003735">
    <property type="term" value="F:structural constituent of ribosome"/>
    <property type="evidence" value="ECO:0007669"/>
    <property type="project" value="InterPro"/>
</dbReference>
<dbReference type="GO" id="GO:0006412">
    <property type="term" value="P:translation"/>
    <property type="evidence" value="ECO:0007669"/>
    <property type="project" value="UniProtKB-UniRule"/>
</dbReference>
<dbReference type="Gene3D" id="2.20.28.120">
    <property type="entry name" value="Ribosomal protein L33"/>
    <property type="match status" value="1"/>
</dbReference>
<dbReference type="HAMAP" id="MF_00294">
    <property type="entry name" value="Ribosomal_bL33"/>
    <property type="match status" value="1"/>
</dbReference>
<dbReference type="InterPro" id="IPR001705">
    <property type="entry name" value="Ribosomal_bL33"/>
</dbReference>
<dbReference type="InterPro" id="IPR038584">
    <property type="entry name" value="Ribosomal_bL33_sf"/>
</dbReference>
<dbReference type="InterPro" id="IPR011332">
    <property type="entry name" value="Ribosomal_zn-bd"/>
</dbReference>
<dbReference type="NCBIfam" id="NF001860">
    <property type="entry name" value="PRK00595.1"/>
    <property type="match status" value="1"/>
</dbReference>
<dbReference type="NCBIfam" id="TIGR01023">
    <property type="entry name" value="rpmG_bact"/>
    <property type="match status" value="1"/>
</dbReference>
<dbReference type="PANTHER" id="PTHR15238">
    <property type="entry name" value="54S RIBOSOMAL PROTEIN L39, MITOCHONDRIAL"/>
    <property type="match status" value="1"/>
</dbReference>
<dbReference type="PANTHER" id="PTHR15238:SF1">
    <property type="entry name" value="LARGE RIBOSOMAL SUBUNIT PROTEIN BL33M"/>
    <property type="match status" value="1"/>
</dbReference>
<dbReference type="Pfam" id="PF00471">
    <property type="entry name" value="Ribosomal_L33"/>
    <property type="match status" value="1"/>
</dbReference>
<dbReference type="SUPFAM" id="SSF57829">
    <property type="entry name" value="Zn-binding ribosomal proteins"/>
    <property type="match status" value="1"/>
</dbReference>
<reference key="1">
    <citation type="submission" date="2007-08" db="EMBL/GenBank/DDBJ databases">
        <title>Complete sequence of Roseiflexus castenholzii DSM 13941.</title>
        <authorList>
            <consortium name="US DOE Joint Genome Institute"/>
            <person name="Copeland A."/>
            <person name="Lucas S."/>
            <person name="Lapidus A."/>
            <person name="Barry K."/>
            <person name="Glavina del Rio T."/>
            <person name="Dalin E."/>
            <person name="Tice H."/>
            <person name="Pitluck S."/>
            <person name="Thompson L.S."/>
            <person name="Brettin T."/>
            <person name="Bruce D."/>
            <person name="Detter J.C."/>
            <person name="Han C."/>
            <person name="Tapia R."/>
            <person name="Schmutz J."/>
            <person name="Larimer F."/>
            <person name="Land M."/>
            <person name="Hauser L."/>
            <person name="Kyrpides N."/>
            <person name="Mikhailova N."/>
            <person name="Bryant D.A."/>
            <person name="Hanada S."/>
            <person name="Tsukatani Y."/>
            <person name="Richardson P."/>
        </authorList>
    </citation>
    <scope>NUCLEOTIDE SEQUENCE [LARGE SCALE GENOMIC DNA]</scope>
    <source>
        <strain>DSM 13941 / HLO8</strain>
    </source>
</reference>
<proteinExistence type="inferred from homology"/>
<gene>
    <name evidence="1" type="primary">rpmG</name>
    <name type="ordered locus">Rcas_3334</name>
</gene>
<accession>A7NP88</accession>
<protein>
    <recommendedName>
        <fullName evidence="1">Large ribosomal subunit protein bL33</fullName>
    </recommendedName>
    <alternativeName>
        <fullName evidence="2">50S ribosomal protein L33</fullName>
    </alternativeName>
</protein>
<name>RL33_ROSCS</name>
<evidence type="ECO:0000255" key="1">
    <source>
        <dbReference type="HAMAP-Rule" id="MF_00294"/>
    </source>
</evidence>
<evidence type="ECO:0000305" key="2"/>